<organism>
    <name type="scientific">Salmonella paratyphi C (strain RKS4594)</name>
    <dbReference type="NCBI Taxonomy" id="476213"/>
    <lineage>
        <taxon>Bacteria</taxon>
        <taxon>Pseudomonadati</taxon>
        <taxon>Pseudomonadota</taxon>
        <taxon>Gammaproteobacteria</taxon>
        <taxon>Enterobacterales</taxon>
        <taxon>Enterobacteriaceae</taxon>
        <taxon>Salmonella</taxon>
    </lineage>
</organism>
<name>PFKA_SALPC</name>
<proteinExistence type="inferred from homology"/>
<protein>
    <recommendedName>
        <fullName evidence="1">ATP-dependent 6-phosphofructokinase</fullName>
        <shortName evidence="1">ATP-PFK</shortName>
        <shortName evidence="1">Phosphofructokinase</shortName>
        <ecNumber evidence="1">2.7.1.11</ecNumber>
    </recommendedName>
    <alternativeName>
        <fullName evidence="1">Phosphohexokinase</fullName>
    </alternativeName>
</protein>
<keyword id="KW-0021">Allosteric enzyme</keyword>
<keyword id="KW-0067">ATP-binding</keyword>
<keyword id="KW-0963">Cytoplasm</keyword>
<keyword id="KW-0324">Glycolysis</keyword>
<keyword id="KW-0418">Kinase</keyword>
<keyword id="KW-0460">Magnesium</keyword>
<keyword id="KW-0479">Metal-binding</keyword>
<keyword id="KW-0547">Nucleotide-binding</keyword>
<keyword id="KW-0808">Transferase</keyword>
<dbReference type="EC" id="2.7.1.11" evidence="1"/>
<dbReference type="EMBL" id="CP000857">
    <property type="protein sequence ID" value="ACN48233.1"/>
    <property type="molecule type" value="Genomic_DNA"/>
</dbReference>
<dbReference type="RefSeq" id="WP_000591793.1">
    <property type="nucleotide sequence ID" value="NC_012125.1"/>
</dbReference>
<dbReference type="SMR" id="C0Q414"/>
<dbReference type="GeneID" id="66758327"/>
<dbReference type="KEGG" id="sei:SPC_4169"/>
<dbReference type="HOGENOM" id="CLU_020655_0_1_6"/>
<dbReference type="UniPathway" id="UPA00109">
    <property type="reaction ID" value="UER00182"/>
</dbReference>
<dbReference type="Proteomes" id="UP000001599">
    <property type="component" value="Chromosome"/>
</dbReference>
<dbReference type="GO" id="GO:0005945">
    <property type="term" value="C:6-phosphofructokinase complex"/>
    <property type="evidence" value="ECO:0007669"/>
    <property type="project" value="TreeGrafter"/>
</dbReference>
<dbReference type="GO" id="GO:0003872">
    <property type="term" value="F:6-phosphofructokinase activity"/>
    <property type="evidence" value="ECO:0007669"/>
    <property type="project" value="UniProtKB-UniRule"/>
</dbReference>
<dbReference type="GO" id="GO:0016208">
    <property type="term" value="F:AMP binding"/>
    <property type="evidence" value="ECO:0007669"/>
    <property type="project" value="TreeGrafter"/>
</dbReference>
<dbReference type="GO" id="GO:0005524">
    <property type="term" value="F:ATP binding"/>
    <property type="evidence" value="ECO:0007669"/>
    <property type="project" value="UniProtKB-KW"/>
</dbReference>
<dbReference type="GO" id="GO:0070095">
    <property type="term" value="F:fructose-6-phosphate binding"/>
    <property type="evidence" value="ECO:0007669"/>
    <property type="project" value="TreeGrafter"/>
</dbReference>
<dbReference type="GO" id="GO:0042802">
    <property type="term" value="F:identical protein binding"/>
    <property type="evidence" value="ECO:0007669"/>
    <property type="project" value="TreeGrafter"/>
</dbReference>
<dbReference type="GO" id="GO:0046872">
    <property type="term" value="F:metal ion binding"/>
    <property type="evidence" value="ECO:0007669"/>
    <property type="project" value="UniProtKB-KW"/>
</dbReference>
<dbReference type="GO" id="GO:0048029">
    <property type="term" value="F:monosaccharide binding"/>
    <property type="evidence" value="ECO:0007669"/>
    <property type="project" value="TreeGrafter"/>
</dbReference>
<dbReference type="GO" id="GO:0061621">
    <property type="term" value="P:canonical glycolysis"/>
    <property type="evidence" value="ECO:0007669"/>
    <property type="project" value="TreeGrafter"/>
</dbReference>
<dbReference type="GO" id="GO:0030388">
    <property type="term" value="P:fructose 1,6-bisphosphate metabolic process"/>
    <property type="evidence" value="ECO:0007669"/>
    <property type="project" value="TreeGrafter"/>
</dbReference>
<dbReference type="GO" id="GO:0006002">
    <property type="term" value="P:fructose 6-phosphate metabolic process"/>
    <property type="evidence" value="ECO:0007669"/>
    <property type="project" value="InterPro"/>
</dbReference>
<dbReference type="CDD" id="cd00763">
    <property type="entry name" value="Bacterial_PFK"/>
    <property type="match status" value="1"/>
</dbReference>
<dbReference type="FunFam" id="3.40.50.450:FF:000001">
    <property type="entry name" value="ATP-dependent 6-phosphofructokinase"/>
    <property type="match status" value="1"/>
</dbReference>
<dbReference type="FunFam" id="3.40.50.460:FF:000002">
    <property type="entry name" value="ATP-dependent 6-phosphofructokinase"/>
    <property type="match status" value="1"/>
</dbReference>
<dbReference type="Gene3D" id="3.40.50.450">
    <property type="match status" value="1"/>
</dbReference>
<dbReference type="Gene3D" id="3.40.50.460">
    <property type="entry name" value="Phosphofructokinase domain"/>
    <property type="match status" value="1"/>
</dbReference>
<dbReference type="HAMAP" id="MF_00339">
    <property type="entry name" value="Phosphofructokinase_I_B1"/>
    <property type="match status" value="1"/>
</dbReference>
<dbReference type="InterPro" id="IPR022953">
    <property type="entry name" value="ATP_PFK"/>
</dbReference>
<dbReference type="InterPro" id="IPR012003">
    <property type="entry name" value="ATP_PFK_prok-type"/>
</dbReference>
<dbReference type="InterPro" id="IPR012828">
    <property type="entry name" value="PFKA_ATP_prok"/>
</dbReference>
<dbReference type="InterPro" id="IPR015912">
    <property type="entry name" value="Phosphofructokinase_CS"/>
</dbReference>
<dbReference type="InterPro" id="IPR000023">
    <property type="entry name" value="Phosphofructokinase_dom"/>
</dbReference>
<dbReference type="InterPro" id="IPR035966">
    <property type="entry name" value="PKF_sf"/>
</dbReference>
<dbReference type="NCBIfam" id="TIGR02482">
    <property type="entry name" value="PFKA_ATP"/>
    <property type="match status" value="1"/>
</dbReference>
<dbReference type="NCBIfam" id="NF002872">
    <property type="entry name" value="PRK03202.1"/>
    <property type="match status" value="1"/>
</dbReference>
<dbReference type="PANTHER" id="PTHR13697:SF4">
    <property type="entry name" value="ATP-DEPENDENT 6-PHOSPHOFRUCTOKINASE"/>
    <property type="match status" value="1"/>
</dbReference>
<dbReference type="PANTHER" id="PTHR13697">
    <property type="entry name" value="PHOSPHOFRUCTOKINASE"/>
    <property type="match status" value="1"/>
</dbReference>
<dbReference type="Pfam" id="PF00365">
    <property type="entry name" value="PFK"/>
    <property type="match status" value="1"/>
</dbReference>
<dbReference type="PIRSF" id="PIRSF000532">
    <property type="entry name" value="ATP_PFK_prok"/>
    <property type="match status" value="1"/>
</dbReference>
<dbReference type="PRINTS" id="PR00476">
    <property type="entry name" value="PHFRCTKINASE"/>
</dbReference>
<dbReference type="SUPFAM" id="SSF53784">
    <property type="entry name" value="Phosphofructokinase"/>
    <property type="match status" value="1"/>
</dbReference>
<dbReference type="PROSITE" id="PS00433">
    <property type="entry name" value="PHOSPHOFRUCTOKINASE"/>
    <property type="match status" value="1"/>
</dbReference>
<accession>C0Q414</accession>
<comment type="function">
    <text evidence="1">Catalyzes the phosphorylation of D-fructose 6-phosphate to fructose 1,6-bisphosphate by ATP, the first committing step of glycolysis.</text>
</comment>
<comment type="catalytic activity">
    <reaction evidence="1">
        <text>beta-D-fructose 6-phosphate + ATP = beta-D-fructose 1,6-bisphosphate + ADP + H(+)</text>
        <dbReference type="Rhea" id="RHEA:16109"/>
        <dbReference type="ChEBI" id="CHEBI:15378"/>
        <dbReference type="ChEBI" id="CHEBI:30616"/>
        <dbReference type="ChEBI" id="CHEBI:32966"/>
        <dbReference type="ChEBI" id="CHEBI:57634"/>
        <dbReference type="ChEBI" id="CHEBI:456216"/>
        <dbReference type="EC" id="2.7.1.11"/>
    </reaction>
</comment>
<comment type="cofactor">
    <cofactor evidence="1">
        <name>Mg(2+)</name>
        <dbReference type="ChEBI" id="CHEBI:18420"/>
    </cofactor>
</comment>
<comment type="activity regulation">
    <text evidence="1">Allosterically activated by ADP and other diphosphonucleosides, and allosterically inhibited by phosphoenolpyruvate.</text>
</comment>
<comment type="pathway">
    <text evidence="1">Carbohydrate degradation; glycolysis; D-glyceraldehyde 3-phosphate and glycerone phosphate from D-glucose: step 3/4.</text>
</comment>
<comment type="subunit">
    <text evidence="1">Homotetramer.</text>
</comment>
<comment type="subcellular location">
    <subcellularLocation>
        <location evidence="1">Cytoplasm</location>
    </subcellularLocation>
</comment>
<comment type="similarity">
    <text evidence="1">Belongs to the phosphofructokinase type A (PFKA) family. ATP-dependent PFK group I subfamily. Prokaryotic clade 'B1' sub-subfamily.</text>
</comment>
<sequence>MIKKIGVLTSGGDAPGMNAAIRGVVRAALTEGLEVMGIYDGYLGLYEDRMVQLDRYSVSDMINRGGTFLGSARFPEFRDENIRAVAIENLKKRGIDALVVIGGDGSYMGAKRLTEMGFPCIGLPGTIDNDIKGTDYTIGYFTALGTVVEAIDRLRDTSSSHQRISIVEVMGRYCGDLTLAAAIAGGCEFIVVPEVEFNREDLVAEIKAGIAKGKKHAIVAITEHMCDVDELAHFIEKETGRETRATVLGHIQRGGSPVPYDRILASRMGAYAIDLLLEGHGGRCVGIQNEQLVHHDIIDAIENMKRPFKSDWMECAKKLY</sequence>
<gene>
    <name evidence="1" type="primary">pfkA</name>
    <name type="ordered locus">SPC_4169</name>
</gene>
<feature type="chain" id="PRO_1000192378" description="ATP-dependent 6-phosphofructokinase">
    <location>
        <begin position="1"/>
        <end position="320"/>
    </location>
</feature>
<feature type="active site" description="Proton acceptor" evidence="1">
    <location>
        <position position="128"/>
    </location>
</feature>
<feature type="binding site" evidence="1">
    <location>
        <position position="12"/>
    </location>
    <ligand>
        <name>ATP</name>
        <dbReference type="ChEBI" id="CHEBI:30616"/>
    </ligand>
</feature>
<feature type="binding site" evidence="1">
    <location>
        <begin position="22"/>
        <end position="26"/>
    </location>
    <ligand>
        <name>ADP</name>
        <dbReference type="ChEBI" id="CHEBI:456216"/>
        <note>allosteric activator; ligand shared between dimeric partners</note>
    </ligand>
</feature>
<feature type="binding site" evidence="1">
    <location>
        <begin position="55"/>
        <end position="60"/>
    </location>
    <ligand>
        <name>ADP</name>
        <dbReference type="ChEBI" id="CHEBI:456216"/>
        <note>allosteric activator; ligand shared between dimeric partners</note>
    </ligand>
</feature>
<feature type="binding site" evidence="1">
    <location>
        <begin position="73"/>
        <end position="74"/>
    </location>
    <ligand>
        <name>ATP</name>
        <dbReference type="ChEBI" id="CHEBI:30616"/>
    </ligand>
</feature>
<feature type="binding site" evidence="1">
    <location>
        <begin position="103"/>
        <end position="106"/>
    </location>
    <ligand>
        <name>ATP</name>
        <dbReference type="ChEBI" id="CHEBI:30616"/>
    </ligand>
</feature>
<feature type="binding site" evidence="1">
    <location>
        <position position="104"/>
    </location>
    <ligand>
        <name>Mg(2+)</name>
        <dbReference type="ChEBI" id="CHEBI:18420"/>
        <note>catalytic</note>
    </ligand>
</feature>
<feature type="binding site" description="in other chain" evidence="1">
    <location>
        <begin position="126"/>
        <end position="128"/>
    </location>
    <ligand>
        <name>substrate</name>
        <note>ligand shared between dimeric partners</note>
    </ligand>
</feature>
<feature type="binding site" description="in other chain" evidence="1">
    <location>
        <position position="155"/>
    </location>
    <ligand>
        <name>ADP</name>
        <dbReference type="ChEBI" id="CHEBI:456216"/>
        <note>allosteric activator; ligand shared between dimeric partners</note>
    </ligand>
</feature>
<feature type="binding site" evidence="1">
    <location>
        <position position="163"/>
    </location>
    <ligand>
        <name>substrate</name>
        <note>ligand shared between dimeric partners</note>
    </ligand>
</feature>
<feature type="binding site" description="in other chain" evidence="1">
    <location>
        <begin position="170"/>
        <end position="172"/>
    </location>
    <ligand>
        <name>substrate</name>
        <note>ligand shared between dimeric partners</note>
    </ligand>
</feature>
<feature type="binding site" description="in other chain" evidence="1">
    <location>
        <begin position="186"/>
        <end position="188"/>
    </location>
    <ligand>
        <name>ADP</name>
        <dbReference type="ChEBI" id="CHEBI:456216"/>
        <note>allosteric activator; ligand shared between dimeric partners</note>
    </ligand>
</feature>
<feature type="binding site" description="in other chain" evidence="1">
    <location>
        <position position="212"/>
    </location>
    <ligand>
        <name>ADP</name>
        <dbReference type="ChEBI" id="CHEBI:456216"/>
        <note>allosteric activator; ligand shared between dimeric partners</note>
    </ligand>
</feature>
<feature type="binding site" description="in other chain" evidence="1">
    <location>
        <begin position="214"/>
        <end position="216"/>
    </location>
    <ligand>
        <name>ADP</name>
        <dbReference type="ChEBI" id="CHEBI:456216"/>
        <note>allosteric activator; ligand shared between dimeric partners</note>
    </ligand>
</feature>
<feature type="binding site" description="in other chain" evidence="1">
    <location>
        <position position="223"/>
    </location>
    <ligand>
        <name>substrate</name>
        <note>ligand shared between dimeric partners</note>
    </ligand>
</feature>
<feature type="binding site" evidence="1">
    <location>
        <position position="244"/>
    </location>
    <ligand>
        <name>substrate</name>
        <note>ligand shared between dimeric partners</note>
    </ligand>
</feature>
<feature type="binding site" description="in other chain" evidence="1">
    <location>
        <begin position="250"/>
        <end position="253"/>
    </location>
    <ligand>
        <name>substrate</name>
        <note>ligand shared between dimeric partners</note>
    </ligand>
</feature>
<evidence type="ECO:0000255" key="1">
    <source>
        <dbReference type="HAMAP-Rule" id="MF_00339"/>
    </source>
</evidence>
<reference key="1">
    <citation type="journal article" date="2009" name="PLoS ONE">
        <title>Salmonella paratyphi C: genetic divergence from Salmonella choleraesuis and pathogenic convergence with Salmonella typhi.</title>
        <authorList>
            <person name="Liu W.-Q."/>
            <person name="Feng Y."/>
            <person name="Wang Y."/>
            <person name="Zou Q.-H."/>
            <person name="Chen F."/>
            <person name="Guo J.-T."/>
            <person name="Peng Y.-H."/>
            <person name="Jin Y."/>
            <person name="Li Y.-G."/>
            <person name="Hu S.-N."/>
            <person name="Johnston R.N."/>
            <person name="Liu G.-R."/>
            <person name="Liu S.-L."/>
        </authorList>
    </citation>
    <scope>NUCLEOTIDE SEQUENCE [LARGE SCALE GENOMIC DNA]</scope>
    <source>
        <strain>RKS4594</strain>
    </source>
</reference>